<reference key="1">
    <citation type="journal article" date="2008" name="Proc. Natl. Acad. Sci. U.S.A.">
        <title>Complete genome of the uncultured termite group 1 bacteria in a single host protist cell.</title>
        <authorList>
            <person name="Hongoh Y."/>
            <person name="Sharma V.K."/>
            <person name="Prakash T."/>
            <person name="Noda S."/>
            <person name="Taylor T.D."/>
            <person name="Kudo T."/>
            <person name="Sakaki Y."/>
            <person name="Toyoda A."/>
            <person name="Hattori M."/>
            <person name="Ohkuma M."/>
        </authorList>
    </citation>
    <scope>NUCLEOTIDE SEQUENCE [LARGE SCALE GENOMIC DNA]</scope>
</reference>
<dbReference type="EMBL" id="AP009510">
    <property type="protein sequence ID" value="BAG13572.1"/>
    <property type="molecule type" value="Genomic_DNA"/>
</dbReference>
<dbReference type="RefSeq" id="WP_015423101.1">
    <property type="nucleotide sequence ID" value="NC_020419.1"/>
</dbReference>
<dbReference type="SMR" id="B1GZ90"/>
<dbReference type="STRING" id="471821.TGRD_089"/>
<dbReference type="KEGG" id="rsd:TGRD_089"/>
<dbReference type="PATRIC" id="fig|471821.5.peg.133"/>
<dbReference type="HOGENOM" id="CLU_078858_2_1_0"/>
<dbReference type="Proteomes" id="UP000001691">
    <property type="component" value="Chromosome"/>
</dbReference>
<dbReference type="GO" id="GO:0022625">
    <property type="term" value="C:cytosolic large ribosomal subunit"/>
    <property type="evidence" value="ECO:0007669"/>
    <property type="project" value="TreeGrafter"/>
</dbReference>
<dbReference type="GO" id="GO:0019843">
    <property type="term" value="F:rRNA binding"/>
    <property type="evidence" value="ECO:0007669"/>
    <property type="project" value="UniProtKB-UniRule"/>
</dbReference>
<dbReference type="GO" id="GO:0003735">
    <property type="term" value="F:structural constituent of ribosome"/>
    <property type="evidence" value="ECO:0007669"/>
    <property type="project" value="InterPro"/>
</dbReference>
<dbReference type="GO" id="GO:0000049">
    <property type="term" value="F:tRNA binding"/>
    <property type="evidence" value="ECO:0007669"/>
    <property type="project" value="UniProtKB-KW"/>
</dbReference>
<dbReference type="GO" id="GO:0006412">
    <property type="term" value="P:translation"/>
    <property type="evidence" value="ECO:0007669"/>
    <property type="project" value="UniProtKB-UniRule"/>
</dbReference>
<dbReference type="CDD" id="cd01433">
    <property type="entry name" value="Ribosomal_L16_L10e"/>
    <property type="match status" value="1"/>
</dbReference>
<dbReference type="FunFam" id="3.90.1170.10:FF:000001">
    <property type="entry name" value="50S ribosomal protein L16"/>
    <property type="match status" value="1"/>
</dbReference>
<dbReference type="Gene3D" id="3.90.1170.10">
    <property type="entry name" value="Ribosomal protein L10e/L16"/>
    <property type="match status" value="1"/>
</dbReference>
<dbReference type="HAMAP" id="MF_01342">
    <property type="entry name" value="Ribosomal_uL16"/>
    <property type="match status" value="1"/>
</dbReference>
<dbReference type="InterPro" id="IPR047873">
    <property type="entry name" value="Ribosomal_uL16"/>
</dbReference>
<dbReference type="InterPro" id="IPR000114">
    <property type="entry name" value="Ribosomal_uL16_bact-type"/>
</dbReference>
<dbReference type="InterPro" id="IPR020798">
    <property type="entry name" value="Ribosomal_uL16_CS"/>
</dbReference>
<dbReference type="InterPro" id="IPR016180">
    <property type="entry name" value="Ribosomal_uL16_dom"/>
</dbReference>
<dbReference type="InterPro" id="IPR036920">
    <property type="entry name" value="Ribosomal_uL16_sf"/>
</dbReference>
<dbReference type="NCBIfam" id="TIGR01164">
    <property type="entry name" value="rplP_bact"/>
    <property type="match status" value="1"/>
</dbReference>
<dbReference type="PANTHER" id="PTHR12220">
    <property type="entry name" value="50S/60S RIBOSOMAL PROTEIN L16"/>
    <property type="match status" value="1"/>
</dbReference>
<dbReference type="PANTHER" id="PTHR12220:SF13">
    <property type="entry name" value="LARGE RIBOSOMAL SUBUNIT PROTEIN UL16M"/>
    <property type="match status" value="1"/>
</dbReference>
<dbReference type="Pfam" id="PF00252">
    <property type="entry name" value="Ribosomal_L16"/>
    <property type="match status" value="1"/>
</dbReference>
<dbReference type="PRINTS" id="PR00060">
    <property type="entry name" value="RIBOSOMALL16"/>
</dbReference>
<dbReference type="SUPFAM" id="SSF54686">
    <property type="entry name" value="Ribosomal protein L16p/L10e"/>
    <property type="match status" value="1"/>
</dbReference>
<dbReference type="PROSITE" id="PS00586">
    <property type="entry name" value="RIBOSOMAL_L16_1"/>
    <property type="match status" value="1"/>
</dbReference>
<dbReference type="PROSITE" id="PS00701">
    <property type="entry name" value="RIBOSOMAL_L16_2"/>
    <property type="match status" value="1"/>
</dbReference>
<accession>B1GZ90</accession>
<proteinExistence type="inferred from homology"/>
<name>RL16_ENDTX</name>
<feature type="chain" id="PRO_1000143046" description="Large ribosomal subunit protein uL16">
    <location>
        <begin position="1"/>
        <end position="137"/>
    </location>
</feature>
<gene>
    <name evidence="1" type="primary">rplP</name>
    <name type="ordered locus">TGRD_089</name>
</gene>
<organism>
    <name type="scientific">Endomicrobium trichonymphae</name>
    <dbReference type="NCBI Taxonomy" id="1408204"/>
    <lineage>
        <taxon>Bacteria</taxon>
        <taxon>Pseudomonadati</taxon>
        <taxon>Elusimicrobiota</taxon>
        <taxon>Endomicrobiia</taxon>
        <taxon>Endomicrobiales</taxon>
        <taxon>Endomicrobiaceae</taxon>
        <taxon>Candidatus Endomicrobiellum</taxon>
    </lineage>
</organism>
<comment type="function">
    <text evidence="1">Binds 23S rRNA and is also seen to make contacts with the A and possibly P site tRNAs.</text>
</comment>
<comment type="subunit">
    <text evidence="1">Part of the 50S ribosomal subunit.</text>
</comment>
<comment type="similarity">
    <text evidence="1">Belongs to the universal ribosomal protein uL16 family.</text>
</comment>
<sequence length="137" mass="15376">MLMPKRVKYRKMHRGRMKGKAKGGVSLAFGKYGLQALEPVWINSNQIEAARIALARSIKKGGKVWIRIFPDKPVTKKPAETRMGKGKGDPQFWVAVVKPGRVMFEMEGIPETEAKKALRLASNKLPIHTKILVRADI</sequence>
<evidence type="ECO:0000255" key="1">
    <source>
        <dbReference type="HAMAP-Rule" id="MF_01342"/>
    </source>
</evidence>
<evidence type="ECO:0000305" key="2"/>
<keyword id="KW-0687">Ribonucleoprotein</keyword>
<keyword id="KW-0689">Ribosomal protein</keyword>
<keyword id="KW-0694">RNA-binding</keyword>
<keyword id="KW-0699">rRNA-binding</keyword>
<keyword id="KW-0820">tRNA-binding</keyword>
<protein>
    <recommendedName>
        <fullName evidence="1">Large ribosomal subunit protein uL16</fullName>
    </recommendedName>
    <alternativeName>
        <fullName evidence="2">50S ribosomal protein L16</fullName>
    </alternativeName>
</protein>